<dbReference type="EC" id="2.1.1.199" evidence="1"/>
<dbReference type="EMBL" id="CP001638">
    <property type="protein sequence ID" value="ACS23872.1"/>
    <property type="molecule type" value="Genomic_DNA"/>
</dbReference>
<dbReference type="SMR" id="C5D8L5"/>
<dbReference type="STRING" id="471223.GWCH70_1012"/>
<dbReference type="KEGG" id="gwc:GWCH70_1012"/>
<dbReference type="eggNOG" id="COG0275">
    <property type="taxonomic scope" value="Bacteria"/>
</dbReference>
<dbReference type="HOGENOM" id="CLU_038422_2_0_9"/>
<dbReference type="OrthoDB" id="9806637at2"/>
<dbReference type="GO" id="GO:0005737">
    <property type="term" value="C:cytoplasm"/>
    <property type="evidence" value="ECO:0007669"/>
    <property type="project" value="UniProtKB-SubCell"/>
</dbReference>
<dbReference type="GO" id="GO:0071424">
    <property type="term" value="F:rRNA (cytosine-N4-)-methyltransferase activity"/>
    <property type="evidence" value="ECO:0007669"/>
    <property type="project" value="UniProtKB-UniRule"/>
</dbReference>
<dbReference type="GO" id="GO:0070475">
    <property type="term" value="P:rRNA base methylation"/>
    <property type="evidence" value="ECO:0007669"/>
    <property type="project" value="UniProtKB-UniRule"/>
</dbReference>
<dbReference type="CDD" id="cd02440">
    <property type="entry name" value="AdoMet_MTases"/>
    <property type="match status" value="1"/>
</dbReference>
<dbReference type="FunFam" id="1.10.150.170:FF:000001">
    <property type="entry name" value="Ribosomal RNA small subunit methyltransferase H"/>
    <property type="match status" value="1"/>
</dbReference>
<dbReference type="Gene3D" id="1.10.150.170">
    <property type="entry name" value="Putative methyltransferase TM0872, insert domain"/>
    <property type="match status" value="1"/>
</dbReference>
<dbReference type="Gene3D" id="3.40.50.150">
    <property type="entry name" value="Vaccinia Virus protein VP39"/>
    <property type="match status" value="1"/>
</dbReference>
<dbReference type="HAMAP" id="MF_01007">
    <property type="entry name" value="16SrRNA_methyltr_H"/>
    <property type="match status" value="1"/>
</dbReference>
<dbReference type="InterPro" id="IPR002903">
    <property type="entry name" value="RsmH"/>
</dbReference>
<dbReference type="InterPro" id="IPR023397">
    <property type="entry name" value="SAM-dep_MeTrfase_MraW_recog"/>
</dbReference>
<dbReference type="InterPro" id="IPR029063">
    <property type="entry name" value="SAM-dependent_MTases_sf"/>
</dbReference>
<dbReference type="NCBIfam" id="TIGR00006">
    <property type="entry name" value="16S rRNA (cytosine(1402)-N(4))-methyltransferase RsmH"/>
    <property type="match status" value="1"/>
</dbReference>
<dbReference type="PANTHER" id="PTHR11265:SF0">
    <property type="entry name" value="12S RRNA N4-METHYLCYTIDINE METHYLTRANSFERASE"/>
    <property type="match status" value="1"/>
</dbReference>
<dbReference type="PANTHER" id="PTHR11265">
    <property type="entry name" value="S-ADENOSYL-METHYLTRANSFERASE MRAW"/>
    <property type="match status" value="1"/>
</dbReference>
<dbReference type="Pfam" id="PF01795">
    <property type="entry name" value="Methyltransf_5"/>
    <property type="match status" value="1"/>
</dbReference>
<dbReference type="PIRSF" id="PIRSF004486">
    <property type="entry name" value="MraW"/>
    <property type="match status" value="1"/>
</dbReference>
<dbReference type="SUPFAM" id="SSF81799">
    <property type="entry name" value="Putative methyltransferase TM0872, insert domain"/>
    <property type="match status" value="1"/>
</dbReference>
<dbReference type="SUPFAM" id="SSF53335">
    <property type="entry name" value="S-adenosyl-L-methionine-dependent methyltransferases"/>
    <property type="match status" value="1"/>
</dbReference>
<keyword id="KW-0963">Cytoplasm</keyword>
<keyword id="KW-0489">Methyltransferase</keyword>
<keyword id="KW-0698">rRNA processing</keyword>
<keyword id="KW-0949">S-adenosyl-L-methionine</keyword>
<keyword id="KW-0808">Transferase</keyword>
<feature type="chain" id="PRO_0000386907" description="Ribosomal RNA small subunit methyltransferase H">
    <location>
        <begin position="1"/>
        <end position="310"/>
    </location>
</feature>
<feature type="binding site" evidence="1">
    <location>
        <begin position="32"/>
        <end position="34"/>
    </location>
    <ligand>
        <name>S-adenosyl-L-methionine</name>
        <dbReference type="ChEBI" id="CHEBI:59789"/>
    </ligand>
</feature>
<feature type="binding site" evidence="1">
    <location>
        <position position="52"/>
    </location>
    <ligand>
        <name>S-adenosyl-L-methionine</name>
        <dbReference type="ChEBI" id="CHEBI:59789"/>
    </ligand>
</feature>
<feature type="binding site" evidence="1">
    <location>
        <position position="83"/>
    </location>
    <ligand>
        <name>S-adenosyl-L-methionine</name>
        <dbReference type="ChEBI" id="CHEBI:59789"/>
    </ligand>
</feature>
<feature type="binding site" evidence="1">
    <location>
        <position position="100"/>
    </location>
    <ligand>
        <name>S-adenosyl-L-methionine</name>
        <dbReference type="ChEBI" id="CHEBI:59789"/>
    </ligand>
</feature>
<feature type="binding site" evidence="1">
    <location>
        <position position="107"/>
    </location>
    <ligand>
        <name>S-adenosyl-L-methionine</name>
        <dbReference type="ChEBI" id="CHEBI:59789"/>
    </ligand>
</feature>
<proteinExistence type="inferred from homology"/>
<protein>
    <recommendedName>
        <fullName evidence="1">Ribosomal RNA small subunit methyltransferase H</fullName>
        <ecNumber evidence="1">2.1.1.199</ecNumber>
    </recommendedName>
    <alternativeName>
        <fullName evidence="1">16S rRNA m(4)C1402 methyltransferase</fullName>
    </alternativeName>
    <alternativeName>
        <fullName evidence="1">rRNA (cytosine-N(4)-)-methyltransferase RsmH</fullName>
    </alternativeName>
</protein>
<gene>
    <name evidence="1" type="primary">rsmH</name>
    <name type="synonym">mraW</name>
    <name type="ordered locus">GWCH70_1012</name>
</gene>
<accession>C5D8L5</accession>
<name>RSMH_GEOSW</name>
<comment type="function">
    <text evidence="1">Specifically methylates the N4 position of cytidine in position 1402 (C1402) of 16S rRNA.</text>
</comment>
<comment type="catalytic activity">
    <reaction evidence="1">
        <text>cytidine(1402) in 16S rRNA + S-adenosyl-L-methionine = N(4)-methylcytidine(1402) in 16S rRNA + S-adenosyl-L-homocysteine + H(+)</text>
        <dbReference type="Rhea" id="RHEA:42928"/>
        <dbReference type="Rhea" id="RHEA-COMP:10286"/>
        <dbReference type="Rhea" id="RHEA-COMP:10287"/>
        <dbReference type="ChEBI" id="CHEBI:15378"/>
        <dbReference type="ChEBI" id="CHEBI:57856"/>
        <dbReference type="ChEBI" id="CHEBI:59789"/>
        <dbReference type="ChEBI" id="CHEBI:74506"/>
        <dbReference type="ChEBI" id="CHEBI:82748"/>
        <dbReference type="EC" id="2.1.1.199"/>
    </reaction>
</comment>
<comment type="subcellular location">
    <subcellularLocation>
        <location evidence="1">Cytoplasm</location>
    </subcellularLocation>
</comment>
<comment type="similarity">
    <text evidence="1">Belongs to the methyltransferase superfamily. RsmH family.</text>
</comment>
<organism>
    <name type="scientific">Geobacillus sp. (strain WCH70)</name>
    <dbReference type="NCBI Taxonomy" id="471223"/>
    <lineage>
        <taxon>Bacteria</taxon>
        <taxon>Bacillati</taxon>
        <taxon>Bacillota</taxon>
        <taxon>Bacilli</taxon>
        <taxon>Bacillales</taxon>
        <taxon>Anoxybacillaceae</taxon>
        <taxon>Geobacillus</taxon>
    </lineage>
</organism>
<sequence>MFQHTTVLLKEAVDGLHIKPDGIYVDCTLGGGGHSEYLLSQLSEDGRLFAFDQDDMAIEYAKKRLARYEKQVTFIRRNFRFLAEELTARGVHRVDGILFDLGVSSPQLDTPERGFSYHHDAPLDMRMNREQSLTAYDIVNHWPYEELVHIFFHYGEEKFSKQVARKIEEVRKEKRIETTGQLVDIIKEAIPAPARRSGGHPAKRIFQAIRIAVNDELQAFKEAITQAIDLLKSGGRISVITFHSLEDRICKVAFKEASQGPQLPPGLPLIPDQYRPALKIITKKPIVPSEEEIEHNHRARSAKLRIAEKL</sequence>
<evidence type="ECO:0000255" key="1">
    <source>
        <dbReference type="HAMAP-Rule" id="MF_01007"/>
    </source>
</evidence>
<reference key="1">
    <citation type="submission" date="2009-06" db="EMBL/GenBank/DDBJ databases">
        <title>Complete sequence of chromosome of Geopacillus sp. WCH70.</title>
        <authorList>
            <consortium name="US DOE Joint Genome Institute"/>
            <person name="Lucas S."/>
            <person name="Copeland A."/>
            <person name="Lapidus A."/>
            <person name="Glavina del Rio T."/>
            <person name="Dalin E."/>
            <person name="Tice H."/>
            <person name="Bruce D."/>
            <person name="Goodwin L."/>
            <person name="Pitluck S."/>
            <person name="Chertkov O."/>
            <person name="Brettin T."/>
            <person name="Detter J.C."/>
            <person name="Han C."/>
            <person name="Larimer F."/>
            <person name="Land M."/>
            <person name="Hauser L."/>
            <person name="Kyrpides N."/>
            <person name="Mikhailova N."/>
            <person name="Brumm P."/>
            <person name="Mead D.A."/>
            <person name="Richardson P."/>
        </authorList>
    </citation>
    <scope>NUCLEOTIDE SEQUENCE [LARGE SCALE GENOMIC DNA]</scope>
    <source>
        <strain>WCH70</strain>
    </source>
</reference>